<reference key="1">
    <citation type="journal article" date="2014" name="PLoS Genet.">
        <title>Analysis of the genome and transcriptome of Cryptococcus neoformans var. grubii reveals complex RNA expression and microevolution leading to virulence attenuation.</title>
        <authorList>
            <person name="Janbon G."/>
            <person name="Ormerod K.L."/>
            <person name="Paulet D."/>
            <person name="Byrnes E.J. III"/>
            <person name="Yadav V."/>
            <person name="Chatterjee G."/>
            <person name="Mullapudi N."/>
            <person name="Hon C.-C."/>
            <person name="Billmyre R.B."/>
            <person name="Brunel F."/>
            <person name="Bahn Y.-S."/>
            <person name="Chen W."/>
            <person name="Chen Y."/>
            <person name="Chow E.W.L."/>
            <person name="Coppee J.-Y."/>
            <person name="Floyd-Averette A."/>
            <person name="Gaillardin C."/>
            <person name="Gerik K.J."/>
            <person name="Goldberg J."/>
            <person name="Gonzalez-Hilarion S."/>
            <person name="Gujja S."/>
            <person name="Hamlin J.L."/>
            <person name="Hsueh Y.-P."/>
            <person name="Ianiri G."/>
            <person name="Jones S."/>
            <person name="Kodira C.D."/>
            <person name="Kozubowski L."/>
            <person name="Lam W."/>
            <person name="Marra M."/>
            <person name="Mesner L.D."/>
            <person name="Mieczkowski P.A."/>
            <person name="Moyrand F."/>
            <person name="Nielsen K."/>
            <person name="Proux C."/>
            <person name="Rossignol T."/>
            <person name="Schein J.E."/>
            <person name="Sun S."/>
            <person name="Wollschlaeger C."/>
            <person name="Wood I.A."/>
            <person name="Zeng Q."/>
            <person name="Neuveglise C."/>
            <person name="Newlon C.S."/>
            <person name="Perfect J.R."/>
            <person name="Lodge J.K."/>
            <person name="Idnurm A."/>
            <person name="Stajich J.E."/>
            <person name="Kronstad J.W."/>
            <person name="Sanyal K."/>
            <person name="Heitman J."/>
            <person name="Fraser J.A."/>
            <person name="Cuomo C.A."/>
            <person name="Dietrich F.S."/>
        </authorList>
    </citation>
    <scope>NUCLEOTIDE SEQUENCE [LARGE SCALE GENOMIC DNA]</scope>
    <source>
        <strain>H99 / ATCC 208821 / CBS 10515 / FGSC 9487</strain>
    </source>
</reference>
<reference key="2">
    <citation type="journal article" date="2015" name="Nat. Commun.">
        <title>Systematic functional profiling of transcription factor networks in Cryptococcus neoformans.</title>
        <authorList>
            <person name="Jung K.W."/>
            <person name="Yang D.H."/>
            <person name="Maeng S."/>
            <person name="Lee K.T."/>
            <person name="So Y.S."/>
            <person name="Hong J."/>
            <person name="Choi J."/>
            <person name="Byun H.J."/>
            <person name="Kim H."/>
            <person name="Bang S."/>
            <person name="Song M.H."/>
            <person name="Lee J.W."/>
            <person name="Kim M.S."/>
            <person name="Kim S.Y."/>
            <person name="Ji J.H."/>
            <person name="Park G."/>
            <person name="Kwon H."/>
            <person name="Cha S."/>
            <person name="Meyers G.L."/>
            <person name="Wang L.L."/>
            <person name="Jang J."/>
            <person name="Janbon G."/>
            <person name="Adedoyin G."/>
            <person name="Kim T."/>
            <person name="Averette A.K."/>
            <person name="Heitman J."/>
            <person name="Cheong E."/>
            <person name="Lee Y.H."/>
            <person name="Lee Y.W."/>
            <person name="Bahn Y.S."/>
        </authorList>
    </citation>
    <scope>IDENTIFICATION</scope>
    <scope>FUNCTION</scope>
    <scope>DISRUPTION PHENOTYPE</scope>
</reference>
<reference key="3">
    <citation type="journal article" date="2019" name="MBio">
        <title>Unraveling melanin biosynthesis and signaling networks in Cryptococcus neoformans.</title>
        <authorList>
            <person name="Lee D."/>
            <person name="Jang E.H."/>
            <person name="Lee M."/>
            <person name="Kim S.W."/>
            <person name="Lee Y."/>
            <person name="Lee K.T."/>
            <person name="Bahn Y.S."/>
        </authorList>
    </citation>
    <scope>INDUCTION</scope>
    <scope>FUNCTION</scope>
    <scope>DISRUPTION PHENOTYPE</scope>
    <scope>SUBCELLULAR LOCATION</scope>
</reference>
<dbReference type="EMBL" id="CP003833">
    <property type="protein sequence ID" value="AFR98848.1"/>
    <property type="molecule type" value="Genomic_DNA"/>
</dbReference>
<dbReference type="RefSeq" id="XP_012053757.1">
    <property type="nucleotide sequence ID" value="XM_012198367.1"/>
</dbReference>
<dbReference type="GeneID" id="23888736"/>
<dbReference type="KEGG" id="cng:CNAG_05420"/>
<dbReference type="VEuPathDB" id="FungiDB:CNAG_05420"/>
<dbReference type="HOGENOM" id="CLU_458694_0_0_1"/>
<dbReference type="OrthoDB" id="8818at5206"/>
<dbReference type="Proteomes" id="UP000010091">
    <property type="component" value="Chromosome 14"/>
</dbReference>
<dbReference type="GO" id="GO:0000785">
    <property type="term" value="C:chromatin"/>
    <property type="evidence" value="ECO:0007669"/>
    <property type="project" value="TreeGrafter"/>
</dbReference>
<dbReference type="GO" id="GO:0005737">
    <property type="term" value="C:cytoplasm"/>
    <property type="evidence" value="ECO:0007669"/>
    <property type="project" value="UniProtKB-SubCell"/>
</dbReference>
<dbReference type="GO" id="GO:0005634">
    <property type="term" value="C:nucleus"/>
    <property type="evidence" value="ECO:0007669"/>
    <property type="project" value="UniProtKB-SubCell"/>
</dbReference>
<dbReference type="GO" id="GO:0000981">
    <property type="term" value="F:DNA-binding transcription factor activity, RNA polymerase II-specific"/>
    <property type="evidence" value="ECO:0007669"/>
    <property type="project" value="InterPro"/>
</dbReference>
<dbReference type="GO" id="GO:0000978">
    <property type="term" value="F:RNA polymerase II cis-regulatory region sequence-specific DNA binding"/>
    <property type="evidence" value="ECO:0007669"/>
    <property type="project" value="InterPro"/>
</dbReference>
<dbReference type="GO" id="GO:0008270">
    <property type="term" value="F:zinc ion binding"/>
    <property type="evidence" value="ECO:0007669"/>
    <property type="project" value="UniProtKB-KW"/>
</dbReference>
<dbReference type="GO" id="GO:0042438">
    <property type="term" value="P:melanin biosynthetic process"/>
    <property type="evidence" value="ECO:0007669"/>
    <property type="project" value="UniProtKB-KW"/>
</dbReference>
<dbReference type="FunFam" id="3.30.160.60:FF:002343">
    <property type="entry name" value="Zinc finger protein 33A"/>
    <property type="match status" value="1"/>
</dbReference>
<dbReference type="Gene3D" id="3.30.160.60">
    <property type="entry name" value="Classic Zinc Finger"/>
    <property type="match status" value="2"/>
</dbReference>
<dbReference type="InterPro" id="IPR051059">
    <property type="entry name" value="VerF-like"/>
</dbReference>
<dbReference type="InterPro" id="IPR036236">
    <property type="entry name" value="Znf_C2H2_sf"/>
</dbReference>
<dbReference type="InterPro" id="IPR013087">
    <property type="entry name" value="Znf_C2H2_type"/>
</dbReference>
<dbReference type="PANTHER" id="PTHR40626">
    <property type="entry name" value="MIP31509P"/>
    <property type="match status" value="1"/>
</dbReference>
<dbReference type="PANTHER" id="PTHR40626:SF32">
    <property type="entry name" value="ZINC FINGER PROTEIN RST2"/>
    <property type="match status" value="1"/>
</dbReference>
<dbReference type="Pfam" id="PF00096">
    <property type="entry name" value="zf-C2H2"/>
    <property type="match status" value="2"/>
</dbReference>
<dbReference type="SMART" id="SM00355">
    <property type="entry name" value="ZnF_C2H2"/>
    <property type="match status" value="2"/>
</dbReference>
<dbReference type="SUPFAM" id="SSF57667">
    <property type="entry name" value="beta-beta-alpha zinc fingers"/>
    <property type="match status" value="1"/>
</dbReference>
<dbReference type="PROSITE" id="PS50157">
    <property type="entry name" value="ZINC_FINGER_C2H2_2"/>
    <property type="match status" value="2"/>
</dbReference>
<sequence>MSFVAPDDRAYYNYSRAPGSAHGVGHESTSPDQRLPSSHSYNKSASAPNESPNQVYHPEMAGPPGSSHSYPPQPMTPLTGSTAYPPQHPPSGSYYLPTQQQQQQQSEQHIPSPPSSSNRPPSATGYTPDGQPIIPVGVSGGKMFRCRGYGDCDKVFTRSEHLARHVRKHTGERPFPCHCGKAFSRLDNLRQHAATVHAEQAQLNETMLASLAPIHAALSQRASREQRRRGEVVEVPKGAVERRRETRKAQAAAAQAAAANGHSQQNSPYAQYHESQWNAPPHPRPRTNGGYDYPYVPEHSLNDDAGPSRRPSSSAGYGYQQGYYDSARPPTAPGTGSSGESMSGLPYPYRPMSASGRELPVPAHYSESEPPATAHGPPPQSPMYGNVPPAQQQPPNWSSPPPGHGAYPPHDAAAYPPPPEGYYHPAHAAHGSYPPREDVYEYHPPGWQGQYPPAATNGGPYAQGYGTGAPPTAPPPHESPFQYNVANPGAEGYPYQNYDSRKRRAEDDFGKDDRKHPRPSSPSNSQVPDSSTAAHANGAHDAPHPHPHPGAAPGNGAMDPPRPHDPNWLPATSERRGSLAISALLGSPPKTMRSRPSTADGGAAGAHGYESYHYDPHGQVSDDQQTGVDKEREKKEEVKQQDDKKTQ</sequence>
<gene>
    <name evidence="5" type="primary">USV101</name>
    <name type="ORF">CNAG_05420</name>
</gene>
<keyword id="KW-0963">Cytoplasm</keyword>
<keyword id="KW-0470">Melanin biosynthesis</keyword>
<keyword id="KW-0479">Metal-binding</keyword>
<keyword id="KW-0539">Nucleus</keyword>
<keyword id="KW-0677">Repeat</keyword>
<keyword id="KW-0843">Virulence</keyword>
<keyword id="KW-0862">Zinc</keyword>
<keyword id="KW-0863">Zinc-finger</keyword>
<protein>
    <recommendedName>
        <fullName evidence="5">C2H2 finger domain transcription factor USV101</fullName>
    </recommendedName>
</protein>
<evidence type="ECO:0000255" key="1">
    <source>
        <dbReference type="PROSITE-ProRule" id="PRU00042"/>
    </source>
</evidence>
<evidence type="ECO:0000256" key="2">
    <source>
        <dbReference type="SAM" id="MobiDB-lite"/>
    </source>
</evidence>
<evidence type="ECO:0000269" key="3">
    <source>
    </source>
</evidence>
<evidence type="ECO:0000269" key="4">
    <source>
    </source>
</evidence>
<evidence type="ECO:0000303" key="5">
    <source>
    </source>
</evidence>
<name>US101_CRYNH</name>
<comment type="function">
    <text evidence="3 4">Transcription factor that promotes pheromone gene expression, which results in a subsequent increase in cell fusion (PubMed:25849373). Also promotes production of melanin and capsule and thereby is required for full virulence (PubMed:31575776).</text>
</comment>
<comment type="subcellular location">
    <subcellularLocation>
        <location evidence="4">Nucleus</location>
    </subcellularLocation>
    <subcellularLocation>
        <location evidence="4">Cytoplasm</location>
    </subcellularLocation>
    <text evidence="4">Evenly distributed throughout the cell under nutrient-rich conditions, but rapidly translocates to the nucleus in response to nutrient starvation.</text>
</comment>
<comment type="induction">
    <text evidence="4">Expression is induced by nutrient starvation (PubMed:31575776). Basal expression is positively regulates by HOB1 (PubMed:31575776).</text>
</comment>
<comment type="disruption phenotype">
    <text evidence="3 4">Leads to growth defects at high temperature (37 to 39 degrees Celsius) (PubMed:25849373). Lacks the ability to engage in cell fusion with the MATa control strain and fails to induce pheromone gene (MFalpha1) expression upon mating (PubMed:25849373). Significantly lowers the virulence (PubMed:25849373). Reduces LAC1 induction mediated by nutrient starvation and leads to weakly reduced melanin production (PubMed:31575776).</text>
</comment>
<accession>J9VX63</accession>
<proteinExistence type="evidence at transcript level"/>
<organism>
    <name type="scientific">Cryptococcus neoformans var. grubii serotype A (strain H99 / ATCC 208821 / CBS 10515 / FGSC 9487)</name>
    <name type="common">Filobasidiella neoformans var. grubii</name>
    <dbReference type="NCBI Taxonomy" id="235443"/>
    <lineage>
        <taxon>Eukaryota</taxon>
        <taxon>Fungi</taxon>
        <taxon>Dikarya</taxon>
        <taxon>Basidiomycota</taxon>
        <taxon>Agaricomycotina</taxon>
        <taxon>Tremellomycetes</taxon>
        <taxon>Tremellales</taxon>
        <taxon>Cryptococcaceae</taxon>
        <taxon>Cryptococcus</taxon>
        <taxon>Cryptococcus neoformans species complex</taxon>
    </lineage>
</organism>
<feature type="chain" id="PRO_0000460782" description="C2H2 finger domain transcription factor USV101">
    <location>
        <begin position="1"/>
        <end position="647"/>
    </location>
</feature>
<feature type="zinc finger region" description="C2H2-type 1" evidence="1">
    <location>
        <begin position="144"/>
        <end position="169"/>
    </location>
</feature>
<feature type="zinc finger region" description="C2H2-type 2" evidence="1">
    <location>
        <begin position="175"/>
        <end position="197"/>
    </location>
</feature>
<feature type="region of interest" description="Disordered" evidence="2">
    <location>
        <begin position="1"/>
        <end position="132"/>
    </location>
</feature>
<feature type="region of interest" description="Disordered" evidence="2">
    <location>
        <begin position="220"/>
        <end position="647"/>
    </location>
</feature>
<feature type="compositionally biased region" description="Basic and acidic residues" evidence="2">
    <location>
        <begin position="1"/>
        <end position="10"/>
    </location>
</feature>
<feature type="compositionally biased region" description="Polar residues" evidence="2">
    <location>
        <begin position="27"/>
        <end position="54"/>
    </location>
</feature>
<feature type="compositionally biased region" description="Polar residues" evidence="2">
    <location>
        <begin position="66"/>
        <end position="84"/>
    </location>
</feature>
<feature type="compositionally biased region" description="Low complexity" evidence="2">
    <location>
        <begin position="97"/>
        <end position="122"/>
    </location>
</feature>
<feature type="compositionally biased region" description="Basic and acidic residues" evidence="2">
    <location>
        <begin position="222"/>
        <end position="248"/>
    </location>
</feature>
<feature type="compositionally biased region" description="Low complexity" evidence="2">
    <location>
        <begin position="249"/>
        <end position="259"/>
    </location>
</feature>
<feature type="compositionally biased region" description="Polar residues" evidence="2">
    <location>
        <begin position="261"/>
        <end position="278"/>
    </location>
</feature>
<feature type="compositionally biased region" description="Low complexity" evidence="2">
    <location>
        <begin position="312"/>
        <end position="327"/>
    </location>
</feature>
<feature type="compositionally biased region" description="Low complexity" evidence="2">
    <location>
        <begin position="404"/>
        <end position="414"/>
    </location>
</feature>
<feature type="compositionally biased region" description="Low complexity" evidence="2">
    <location>
        <begin position="421"/>
        <end position="434"/>
    </location>
</feature>
<feature type="compositionally biased region" description="Basic and acidic residues" evidence="2">
    <location>
        <begin position="504"/>
        <end position="515"/>
    </location>
</feature>
<feature type="compositionally biased region" description="Low complexity" evidence="2">
    <location>
        <begin position="521"/>
        <end position="540"/>
    </location>
</feature>
<feature type="compositionally biased region" description="Basic and acidic residues" evidence="2">
    <location>
        <begin position="628"/>
        <end position="647"/>
    </location>
</feature>